<organism>
    <name type="scientific">Arabidopsis thaliana</name>
    <name type="common">Mouse-ear cress</name>
    <dbReference type="NCBI Taxonomy" id="3702"/>
    <lineage>
        <taxon>Eukaryota</taxon>
        <taxon>Viridiplantae</taxon>
        <taxon>Streptophyta</taxon>
        <taxon>Embryophyta</taxon>
        <taxon>Tracheophyta</taxon>
        <taxon>Spermatophyta</taxon>
        <taxon>Magnoliopsida</taxon>
        <taxon>eudicotyledons</taxon>
        <taxon>Gunneridae</taxon>
        <taxon>Pentapetalae</taxon>
        <taxon>rosids</taxon>
        <taxon>malvids</taxon>
        <taxon>Brassicales</taxon>
        <taxon>Brassicaceae</taxon>
        <taxon>Camelineae</taxon>
        <taxon>Arabidopsis</taxon>
    </lineage>
</organism>
<accession>Q9C8N5</accession>
<accession>A5A8C1</accession>
<accession>Q8LA79</accession>
<dbReference type="EMBL" id="AB300236">
    <property type="protein sequence ID" value="BAF62148.1"/>
    <property type="molecule type" value="Genomic_DNA"/>
</dbReference>
<dbReference type="EMBL" id="AB300237">
    <property type="protein sequence ID" value="BAF62149.1"/>
    <property type="molecule type" value="Genomic_DNA"/>
</dbReference>
<dbReference type="EMBL" id="AB300238">
    <property type="protein sequence ID" value="BAF62150.1"/>
    <property type="molecule type" value="Genomic_DNA"/>
</dbReference>
<dbReference type="EMBL" id="AB300239">
    <property type="protein sequence ID" value="BAF62151.1"/>
    <property type="molecule type" value="Genomic_DNA"/>
</dbReference>
<dbReference type="EMBL" id="AB300240">
    <property type="protein sequence ID" value="BAF62152.1"/>
    <property type="molecule type" value="Genomic_DNA"/>
</dbReference>
<dbReference type="EMBL" id="AB300241">
    <property type="protein sequence ID" value="BAF62153.1"/>
    <property type="molecule type" value="Genomic_DNA"/>
</dbReference>
<dbReference type="EMBL" id="AB300242">
    <property type="protein sequence ID" value="BAF62154.1"/>
    <property type="molecule type" value="Genomic_DNA"/>
</dbReference>
<dbReference type="EMBL" id="AB300243">
    <property type="protein sequence ID" value="BAG16782.1"/>
    <property type="molecule type" value="Genomic_DNA"/>
</dbReference>
<dbReference type="EMBL" id="AB300244">
    <property type="protein sequence ID" value="BAF62155.1"/>
    <property type="molecule type" value="Genomic_DNA"/>
</dbReference>
<dbReference type="EMBL" id="AB300245">
    <property type="protein sequence ID" value="BAF62156.1"/>
    <property type="molecule type" value="Genomic_DNA"/>
</dbReference>
<dbReference type="EMBL" id="AB300246">
    <property type="protein sequence ID" value="BAF62157.1"/>
    <property type="molecule type" value="Genomic_DNA"/>
</dbReference>
<dbReference type="EMBL" id="AB300247">
    <property type="protein sequence ID" value="BAF62158.1"/>
    <property type="molecule type" value="Genomic_DNA"/>
</dbReference>
<dbReference type="EMBL" id="AC023913">
    <property type="protein sequence ID" value="AAG51898.1"/>
    <property type="molecule type" value="Genomic_DNA"/>
</dbReference>
<dbReference type="EMBL" id="CP002684">
    <property type="protein sequence ID" value="AEE31703.1"/>
    <property type="molecule type" value="Genomic_DNA"/>
</dbReference>
<dbReference type="EMBL" id="CP002684">
    <property type="protein sequence ID" value="AEE31704.1"/>
    <property type="molecule type" value="Genomic_DNA"/>
</dbReference>
<dbReference type="EMBL" id="AK227128">
    <property type="protein sequence ID" value="BAE99177.1"/>
    <property type="molecule type" value="mRNA"/>
</dbReference>
<dbReference type="EMBL" id="AY087985">
    <property type="protein sequence ID" value="AAM65531.1"/>
    <property type="molecule type" value="mRNA"/>
</dbReference>
<dbReference type="PIR" id="A86468">
    <property type="entry name" value="A86468"/>
</dbReference>
<dbReference type="RefSeq" id="NP_174697.1">
    <molecule id="Q9C8N5-1"/>
    <property type="nucleotide sequence ID" value="NM_103160.5"/>
</dbReference>
<dbReference type="RefSeq" id="NP_849746.1">
    <molecule id="Q9C8N5-1"/>
    <property type="nucleotide sequence ID" value="NM_179415.1"/>
</dbReference>
<dbReference type="BioGRID" id="25571">
    <property type="interactions" value="3"/>
</dbReference>
<dbReference type="FunCoup" id="Q9C8N5">
    <property type="interactions" value="1373"/>
</dbReference>
<dbReference type="IntAct" id="Q9C8N5">
    <property type="interactions" value="1"/>
</dbReference>
<dbReference type="STRING" id="3702.Q9C8N5"/>
<dbReference type="MetOSite" id="Q9C8N5"/>
<dbReference type="PaxDb" id="3702-AT1G34370.2"/>
<dbReference type="ProteomicsDB" id="228424">
    <molecule id="Q9C8N5-1"/>
</dbReference>
<dbReference type="EnsemblPlants" id="AT1G34370.1">
    <molecule id="Q9C8N5-1"/>
    <property type="protein sequence ID" value="AT1G34370.1"/>
    <property type="gene ID" value="AT1G34370"/>
</dbReference>
<dbReference type="EnsemblPlants" id="AT1G34370.2">
    <molecule id="Q9C8N5-1"/>
    <property type="protein sequence ID" value="AT1G34370.2"/>
    <property type="gene ID" value="AT1G34370"/>
</dbReference>
<dbReference type="GeneID" id="840339"/>
<dbReference type="Gramene" id="AT1G34370.1">
    <molecule id="Q9C8N5-1"/>
    <property type="protein sequence ID" value="AT1G34370.1"/>
    <property type="gene ID" value="AT1G34370"/>
</dbReference>
<dbReference type="Gramene" id="AT1G34370.2">
    <molecule id="Q9C8N5-1"/>
    <property type="protein sequence ID" value="AT1G34370.2"/>
    <property type="gene ID" value="AT1G34370"/>
</dbReference>
<dbReference type="KEGG" id="ath:AT1G34370"/>
<dbReference type="Araport" id="AT1G34370"/>
<dbReference type="TAIR" id="AT1G34370">
    <property type="gene designation" value="STOP1"/>
</dbReference>
<dbReference type="eggNOG" id="KOG1721">
    <property type="taxonomic scope" value="Eukaryota"/>
</dbReference>
<dbReference type="InParanoid" id="Q9C8N5"/>
<dbReference type="OMA" id="HEMKNED"/>
<dbReference type="PhylomeDB" id="Q9C8N5"/>
<dbReference type="PRO" id="PR:Q9C8N5"/>
<dbReference type="Proteomes" id="UP000006548">
    <property type="component" value="Chromosome 1"/>
</dbReference>
<dbReference type="ExpressionAtlas" id="Q9C8N5">
    <property type="expression patterns" value="baseline and differential"/>
</dbReference>
<dbReference type="GO" id="GO:0005634">
    <property type="term" value="C:nucleus"/>
    <property type="evidence" value="ECO:0000314"/>
    <property type="project" value="UniProtKB"/>
</dbReference>
<dbReference type="GO" id="GO:0003700">
    <property type="term" value="F:DNA-binding transcription factor activity"/>
    <property type="evidence" value="ECO:0000314"/>
    <property type="project" value="TAIR"/>
</dbReference>
<dbReference type="GO" id="GO:0043565">
    <property type="term" value="F:sequence-specific DNA binding"/>
    <property type="evidence" value="ECO:0000314"/>
    <property type="project" value="TAIR"/>
</dbReference>
<dbReference type="GO" id="GO:0008270">
    <property type="term" value="F:zinc ion binding"/>
    <property type="evidence" value="ECO:0007669"/>
    <property type="project" value="UniProtKB-KW"/>
</dbReference>
<dbReference type="GO" id="GO:0071453">
    <property type="term" value="P:cellular response to oxygen levels"/>
    <property type="evidence" value="ECO:0000315"/>
    <property type="project" value="TAIR"/>
</dbReference>
<dbReference type="GO" id="GO:0071472">
    <property type="term" value="P:cellular response to salt stress"/>
    <property type="evidence" value="ECO:0000316"/>
    <property type="project" value="TAIR"/>
</dbReference>
<dbReference type="GO" id="GO:1900037">
    <property type="term" value="P:regulation of cellular response to hypoxia"/>
    <property type="evidence" value="ECO:0000315"/>
    <property type="project" value="TAIR"/>
</dbReference>
<dbReference type="GO" id="GO:0006355">
    <property type="term" value="P:regulation of DNA-templated transcription"/>
    <property type="evidence" value="ECO:0000315"/>
    <property type="project" value="UniProtKB"/>
</dbReference>
<dbReference type="GO" id="GO:0010447">
    <property type="term" value="P:response to acidic pH"/>
    <property type="evidence" value="ECO:0000315"/>
    <property type="project" value="UniProtKB"/>
</dbReference>
<dbReference type="GO" id="GO:0010044">
    <property type="term" value="P:response to aluminum ion"/>
    <property type="evidence" value="ECO:0000315"/>
    <property type="project" value="UniProtKB"/>
</dbReference>
<dbReference type="FunFam" id="3.30.160.60:FF:002733">
    <property type="entry name" value="Zinc finger family protein"/>
    <property type="match status" value="1"/>
</dbReference>
<dbReference type="Gene3D" id="3.30.160.60">
    <property type="entry name" value="Classic Zinc Finger"/>
    <property type="match status" value="1"/>
</dbReference>
<dbReference type="InterPro" id="IPR044300">
    <property type="entry name" value="STOP1/2"/>
</dbReference>
<dbReference type="InterPro" id="IPR036236">
    <property type="entry name" value="Znf_C2H2_sf"/>
</dbReference>
<dbReference type="InterPro" id="IPR013087">
    <property type="entry name" value="Znf_C2H2_type"/>
</dbReference>
<dbReference type="PANTHER" id="PTHR46352">
    <property type="entry name" value="PROTEIN SENSITIVE TO PROTON RHIZOTOXICITY 1"/>
    <property type="match status" value="1"/>
</dbReference>
<dbReference type="PANTHER" id="PTHR46352:SF1">
    <property type="entry name" value="PROTEIN SENSITIVE TO PROTON RHIZOTOXICITY 1"/>
    <property type="match status" value="1"/>
</dbReference>
<dbReference type="Pfam" id="PF23115">
    <property type="entry name" value="zf-C2H2_STOP2_3rd"/>
    <property type="match status" value="1"/>
</dbReference>
<dbReference type="Pfam" id="PF23118">
    <property type="entry name" value="zf-C2H2_STOP2_C"/>
    <property type="match status" value="1"/>
</dbReference>
<dbReference type="SMART" id="SM00355">
    <property type="entry name" value="ZnF_C2H2"/>
    <property type="match status" value="3"/>
</dbReference>
<dbReference type="SUPFAM" id="SSF57667">
    <property type="entry name" value="beta-beta-alpha zinc fingers"/>
    <property type="match status" value="1"/>
</dbReference>
<dbReference type="PROSITE" id="PS00028">
    <property type="entry name" value="ZINC_FINGER_C2H2_1"/>
    <property type="match status" value="1"/>
</dbReference>
<dbReference type="PROSITE" id="PS50157">
    <property type="entry name" value="ZINC_FINGER_C2H2_2"/>
    <property type="match status" value="1"/>
</dbReference>
<comment type="function">
    <text evidence="3 4 5 6">Probable transcription factor. Together with STOP2, plays a critical role in tolerance to major stress factors in acid soils such as proton H(+) and aluminum ion Al(3+). Required for the expression of genes in response to acidic stress (e.g. ALMT1 and MATE), and Al-activated citrate exudation.</text>
</comment>
<comment type="subcellular location">
    <subcellularLocation>
        <location evidence="5">Nucleus</location>
    </subcellularLocation>
</comment>
<comment type="alternative products">
    <event type="alternative splicing"/>
    <isoform>
        <id>Q9C8N5-1</id>
        <name>1</name>
        <sequence type="displayed"/>
    </isoform>
    <text evidence="9">A number of isoforms are produced. According to EST sequences.</text>
</comment>
<comment type="tissue specificity">
    <text evidence="6">Expressed in roots (e.g. root tips and lateral roots), leaves, flowers (e.g. stigma, sepal, anther, and filament), stems, siliques and cotyledons.</text>
</comment>
<comment type="induction">
    <text evidence="3">By shock H(+) and Al(3+) treatments.</text>
</comment>
<comment type="disruption phenotype">
    <text evidence="3 4 5 6">Hypersensitive to H(+) and Al(3+) rhizotoxicity, reduced induction of genes such as ALMT1 and MATE in response to acidic stress, and impaired Al-activated citrate exudation.</text>
</comment>
<proteinExistence type="evidence at transcript level"/>
<name>STOP1_ARATH</name>
<evidence type="ECO:0000255" key="1">
    <source>
        <dbReference type="PROSITE-ProRule" id="PRU00042"/>
    </source>
</evidence>
<evidence type="ECO:0000256" key="2">
    <source>
        <dbReference type="SAM" id="MobiDB-lite"/>
    </source>
</evidence>
<evidence type="ECO:0000269" key="3">
    <source>
    </source>
</evidence>
<evidence type="ECO:0000269" key="4">
    <source>
    </source>
</evidence>
<evidence type="ECO:0000269" key="5">
    <source>
    </source>
</evidence>
<evidence type="ECO:0000269" key="6">
    <source>
    </source>
</evidence>
<evidence type="ECO:0000303" key="7">
    <source>
    </source>
</evidence>
<evidence type="ECO:0000305" key="8"/>
<evidence type="ECO:0000312" key="9">
    <source>
        <dbReference type="Araport" id="AT1G34370"/>
    </source>
</evidence>
<evidence type="ECO:0000312" key="10">
    <source>
        <dbReference type="EMBL" id="AAG51898.1"/>
    </source>
</evidence>
<sequence>METEDDLCNTNWGSSSSKSREPGSSDCGNSTFAGFTSQQKWEDASILDYEMGVEPGLQESIQANVDFLQGVRAQAWDPRTMLSNLSFMEQKIHQLQDLVHLLVGRGGQLQGRQDELAAQQQQLITTDLTSIIIQLISTAGSLLPSVKHNMSTAPGPFTGQPGSAVFPYVREANNVASQSQNNNNCGAREFDLPKPVLVDEREGHVVEEHEMKDEDDVEEGENLPPGSYEILQLEKEEILAPHTHFCTICGKGFKRDANLRMHMRGHGDEYKTAAALAKPNKESVPGSEPMLIKRYSCPFLGCKRNKEHKKFQPLKTILCVKNHYKRTHCDKSFTCSRCHTKKFSVIADLKTHEKHCGKNKWLCSCGTTFSRKDKLFGHIALFQGHTPAIPLEETKPSASTSTQRGSSEGGNNNQGMVGFNLGSASNANQETTQPGMTDGRICFEESFSPMNFDTCNFGGFHEFPRLMFDDSESSFQMLIANACGFSPRNVGESVSDTSL</sequence>
<keyword id="KW-0025">Alternative splicing</keyword>
<keyword id="KW-0479">Metal-binding</keyword>
<keyword id="KW-0539">Nucleus</keyword>
<keyword id="KW-1185">Reference proteome</keyword>
<keyword id="KW-0677">Repeat</keyword>
<keyword id="KW-0804">Transcription</keyword>
<keyword id="KW-0805">Transcription regulation</keyword>
<keyword id="KW-0862">Zinc</keyword>
<keyword id="KW-0863">Zinc-finger</keyword>
<feature type="chain" id="PRO_0000380136" description="Protein SENSITIVE TO PROTON RHIZOTOXICITY 1">
    <location>
        <begin position="1"/>
        <end position="499"/>
    </location>
</feature>
<feature type="zinc finger region" description="C2H2-type 1" evidence="1">
    <location>
        <begin position="244"/>
        <end position="266"/>
    </location>
</feature>
<feature type="zinc finger region" description="C2H2-type 2; atypical" evidence="1">
    <location>
        <begin position="354"/>
        <end position="385"/>
    </location>
</feature>
<feature type="region of interest" description="Disordered" evidence="2">
    <location>
        <begin position="1"/>
        <end position="31"/>
    </location>
</feature>
<feature type="region of interest" description="Disordered" evidence="2">
    <location>
        <begin position="390"/>
        <end position="436"/>
    </location>
</feature>
<feature type="compositionally biased region" description="Polar residues" evidence="2">
    <location>
        <begin position="396"/>
        <end position="415"/>
    </location>
</feature>
<feature type="compositionally biased region" description="Polar residues" evidence="2">
    <location>
        <begin position="422"/>
        <end position="435"/>
    </location>
</feature>
<feature type="sequence variant" description="In strain: cv. Est-1." evidence="3">
    <original>T</original>
    <variation>N</variation>
    <location>
        <position position="10"/>
    </location>
</feature>
<feature type="sequence variant" description="In strain: cv. Est-1." evidence="3">
    <original>C</original>
    <variation>G</variation>
    <location>
        <position position="27"/>
    </location>
</feature>
<feature type="sequence variant" description="In strain: cv. Est-1." evidence="3">
    <original>S</original>
    <variation>N</variation>
    <location>
        <position position="60"/>
    </location>
</feature>
<feature type="sequence variant" description="In strain: cv. Est-1." evidence="3">
    <original>L</original>
    <variation>V</variation>
    <location>
        <position position="109"/>
    </location>
</feature>
<feature type="sequence conflict" description="In Ref. 5; AAM65531." evidence="8" ref="5">
    <original>T</original>
    <variation>R</variation>
    <location>
        <position position="400"/>
    </location>
</feature>
<gene>
    <name evidence="7" type="primary">STOP1</name>
    <name evidence="9" type="ordered locus">At1g34370</name>
    <name evidence="10" type="ORF">F7P12.7</name>
</gene>
<protein>
    <recommendedName>
        <fullName evidence="7">Protein SENSITIVE TO PROTON RHIZOTOXICITY 1</fullName>
    </recommendedName>
    <alternativeName>
        <fullName evidence="7">Zinc finger protein STOP1</fullName>
    </alternativeName>
</protein>
<reference key="1">
    <citation type="journal article" date="2007" name="Proc. Natl. Acad. Sci. U.S.A.">
        <title>Zinc finger protein STOP1 is critical for proton tolerance in Arabidopsis and coregulates a key gene in aluminum tolerance.</title>
        <authorList>
            <person name="Iuchi S."/>
            <person name="Koyama H."/>
            <person name="Iuchi A."/>
            <person name="Kobayashi Y."/>
            <person name="Kitabayashi S."/>
            <person name="Kobayashi Y."/>
            <person name="Ikka T."/>
            <person name="Hirayama T."/>
            <person name="Shinozaki K."/>
            <person name="Kobayashi M."/>
        </authorList>
    </citation>
    <scope>NUCLEOTIDE SEQUENCE [GENOMIC DNA]</scope>
    <scope>FUNCTION</scope>
    <scope>VARIANTS ASN-10; GLY-27; ASN-60 AND VAL-109</scope>
    <scope>INDUCTION BY SHOCK ACID TREATMENTS</scope>
    <scope>DISRUPTION PHENOTYPE</scope>
    <source>
        <strain>cv. Col-4</strain>
        <strain>cv. Est-1</strain>
        <strain>cv. Fr-3</strain>
        <strain>cv. Goe-0</strain>
        <strain>cv. Kb-0</strain>
        <strain>cv. Kl-5</strain>
        <strain>cv. Landsberg erecta</strain>
        <strain>cv. Li-1</strain>
        <strain>cv. Lo-1</strain>
        <strain>cv. Pi-0</strain>
        <strain>cv. Tu-0</strain>
        <strain>cv. Van-3</strain>
    </source>
</reference>
<reference key="2">
    <citation type="journal article" date="2000" name="Nature">
        <title>Sequence and analysis of chromosome 1 of the plant Arabidopsis thaliana.</title>
        <authorList>
            <person name="Theologis A."/>
            <person name="Ecker J.R."/>
            <person name="Palm C.J."/>
            <person name="Federspiel N.A."/>
            <person name="Kaul S."/>
            <person name="White O."/>
            <person name="Alonso J."/>
            <person name="Altafi H."/>
            <person name="Araujo R."/>
            <person name="Bowman C.L."/>
            <person name="Brooks S.Y."/>
            <person name="Buehler E."/>
            <person name="Chan A."/>
            <person name="Chao Q."/>
            <person name="Chen H."/>
            <person name="Cheuk R.F."/>
            <person name="Chin C.W."/>
            <person name="Chung M.K."/>
            <person name="Conn L."/>
            <person name="Conway A.B."/>
            <person name="Conway A.R."/>
            <person name="Creasy T.H."/>
            <person name="Dewar K."/>
            <person name="Dunn P."/>
            <person name="Etgu P."/>
            <person name="Feldblyum T.V."/>
            <person name="Feng J.-D."/>
            <person name="Fong B."/>
            <person name="Fujii C.Y."/>
            <person name="Gill J.E."/>
            <person name="Goldsmith A.D."/>
            <person name="Haas B."/>
            <person name="Hansen N.F."/>
            <person name="Hughes B."/>
            <person name="Huizar L."/>
            <person name="Hunter J.L."/>
            <person name="Jenkins J."/>
            <person name="Johnson-Hopson C."/>
            <person name="Khan S."/>
            <person name="Khaykin E."/>
            <person name="Kim C.J."/>
            <person name="Koo H.L."/>
            <person name="Kremenetskaia I."/>
            <person name="Kurtz D.B."/>
            <person name="Kwan A."/>
            <person name="Lam B."/>
            <person name="Langin-Hooper S."/>
            <person name="Lee A."/>
            <person name="Lee J.M."/>
            <person name="Lenz C.A."/>
            <person name="Li J.H."/>
            <person name="Li Y.-P."/>
            <person name="Lin X."/>
            <person name="Liu S.X."/>
            <person name="Liu Z.A."/>
            <person name="Luros J.S."/>
            <person name="Maiti R."/>
            <person name="Marziali A."/>
            <person name="Militscher J."/>
            <person name="Miranda M."/>
            <person name="Nguyen M."/>
            <person name="Nierman W.C."/>
            <person name="Osborne B.I."/>
            <person name="Pai G."/>
            <person name="Peterson J."/>
            <person name="Pham P.K."/>
            <person name="Rizzo M."/>
            <person name="Rooney T."/>
            <person name="Rowley D."/>
            <person name="Sakano H."/>
            <person name="Salzberg S.L."/>
            <person name="Schwartz J.R."/>
            <person name="Shinn P."/>
            <person name="Southwick A.M."/>
            <person name="Sun H."/>
            <person name="Tallon L.J."/>
            <person name="Tambunga G."/>
            <person name="Toriumi M.J."/>
            <person name="Town C.D."/>
            <person name="Utterback T."/>
            <person name="Van Aken S."/>
            <person name="Vaysberg M."/>
            <person name="Vysotskaia V.S."/>
            <person name="Walker M."/>
            <person name="Wu D."/>
            <person name="Yu G."/>
            <person name="Fraser C.M."/>
            <person name="Venter J.C."/>
            <person name="Davis R.W."/>
        </authorList>
    </citation>
    <scope>NUCLEOTIDE SEQUENCE [LARGE SCALE GENOMIC DNA]</scope>
    <source>
        <strain>cv. Columbia</strain>
    </source>
</reference>
<reference key="3">
    <citation type="journal article" date="2017" name="Plant J.">
        <title>Araport11: a complete reannotation of the Arabidopsis thaliana reference genome.</title>
        <authorList>
            <person name="Cheng C.Y."/>
            <person name="Krishnakumar V."/>
            <person name="Chan A.P."/>
            <person name="Thibaud-Nissen F."/>
            <person name="Schobel S."/>
            <person name="Town C.D."/>
        </authorList>
    </citation>
    <scope>GENOME REANNOTATION</scope>
    <source>
        <strain>cv. Columbia</strain>
    </source>
</reference>
<reference key="4">
    <citation type="submission" date="2006-07" db="EMBL/GenBank/DDBJ databases">
        <title>Large-scale analysis of RIKEN Arabidopsis full-length (RAFL) cDNAs.</title>
        <authorList>
            <person name="Totoki Y."/>
            <person name="Seki M."/>
            <person name="Ishida J."/>
            <person name="Nakajima M."/>
            <person name="Enju A."/>
            <person name="Kamiya A."/>
            <person name="Narusaka M."/>
            <person name="Shin-i T."/>
            <person name="Nakagawa M."/>
            <person name="Sakamoto N."/>
            <person name="Oishi K."/>
            <person name="Kohara Y."/>
            <person name="Kobayashi M."/>
            <person name="Toyoda A."/>
            <person name="Sakaki Y."/>
            <person name="Sakurai T."/>
            <person name="Iida K."/>
            <person name="Akiyama K."/>
            <person name="Satou M."/>
            <person name="Toyoda T."/>
            <person name="Konagaya A."/>
            <person name="Carninci P."/>
            <person name="Kawai J."/>
            <person name="Hayashizaki Y."/>
            <person name="Shinozaki K."/>
        </authorList>
    </citation>
    <scope>NUCLEOTIDE SEQUENCE [LARGE SCALE MRNA]</scope>
    <source>
        <strain>cv. Columbia</strain>
    </source>
</reference>
<reference key="5">
    <citation type="submission" date="2002-03" db="EMBL/GenBank/DDBJ databases">
        <title>Full-length cDNA from Arabidopsis thaliana.</title>
        <authorList>
            <person name="Brover V.V."/>
            <person name="Troukhan M.E."/>
            <person name="Alexandrov N.A."/>
            <person name="Lu Y.-P."/>
            <person name="Flavell R.B."/>
            <person name="Feldmann K.A."/>
        </authorList>
    </citation>
    <scope>NUCLEOTIDE SEQUENCE [LARGE SCALE MRNA]</scope>
</reference>
<reference key="6">
    <citation type="journal article" date="2004" name="BMC Genomics">
        <title>Conservation, diversification and expansion of C2H2 zinc finger proteins in the Arabidopsis thaliana genome.</title>
        <authorList>
            <person name="Englbrecht C.C."/>
            <person name="Schoof H."/>
            <person name="Boehm S."/>
        </authorList>
    </citation>
    <scope>GENE FAMILY</scope>
</reference>
<reference key="7">
    <citation type="journal article" date="2009" name="Plant J.">
        <title>Aluminum-activated citrate and malate transporters from the MATE and ALMT families function independently to confer Arabidopsis aluminum tolerance.</title>
        <authorList>
            <person name="Liu J."/>
            <person name="Magalhaes J.V."/>
            <person name="Shaff J."/>
            <person name="Kochian L.V."/>
        </authorList>
    </citation>
    <scope>FUNCTION</scope>
    <scope>DISRUPTION PHENOTYPE</scope>
</reference>
<reference key="8">
    <citation type="journal article" date="2009" name="Plant Physiol.">
        <title>STOP1 regulates multiple genes that protect arabidopsis from proton and aluminum toxicities.</title>
        <authorList>
            <person name="Sawaki Y."/>
            <person name="Iuchi S."/>
            <person name="Kobayashi Y."/>
            <person name="Kobayashi Y."/>
            <person name="Ikka T."/>
            <person name="Sakurai N."/>
            <person name="Fujita M."/>
            <person name="Shinozaki K."/>
            <person name="Shibata D."/>
            <person name="Kobayashi M."/>
            <person name="Koyama H."/>
        </authorList>
    </citation>
    <scope>FUNCTION</scope>
    <scope>DISRUPTION PHENOTYPE</scope>
    <scope>SUBCELLULAR LOCATION</scope>
</reference>
<reference key="9">
    <citation type="journal article" date="2014" name="Mol. Plant">
        <title>STOP2 activates transcription of several genes for Al- and low pH-tolerance that are regulated by STOP1 in Arabidopsis.</title>
        <authorList>
            <person name="Kobayashi Y."/>
            <person name="Ohyama Y."/>
            <person name="Kobayashi Y."/>
            <person name="Ito H."/>
            <person name="Iuchi S."/>
            <person name="Fujita M."/>
            <person name="Zhao C.-R."/>
            <person name="Tanveer T."/>
            <person name="Ganesan M."/>
            <person name="Kobayashi M."/>
            <person name="Koyama H."/>
        </authorList>
    </citation>
    <scope>FUNCTION</scope>
    <scope>DISRUPTION PHENOTYPE</scope>
    <scope>TISSUE SPECIFICITY</scope>
    <source>
        <strain>cv. Columbia</strain>
    </source>
</reference>